<evidence type="ECO:0000255" key="1">
    <source>
        <dbReference type="HAMAP-Rule" id="MF_00805"/>
    </source>
</evidence>
<reference key="1">
    <citation type="journal article" date="2009" name="PLoS Genet.">
        <title>Organised genome dynamics in the Escherichia coli species results in highly diverse adaptive paths.</title>
        <authorList>
            <person name="Touchon M."/>
            <person name="Hoede C."/>
            <person name="Tenaillon O."/>
            <person name="Barbe V."/>
            <person name="Baeriswyl S."/>
            <person name="Bidet P."/>
            <person name="Bingen E."/>
            <person name="Bonacorsi S."/>
            <person name="Bouchier C."/>
            <person name="Bouvet O."/>
            <person name="Calteau A."/>
            <person name="Chiapello H."/>
            <person name="Clermont O."/>
            <person name="Cruveiller S."/>
            <person name="Danchin A."/>
            <person name="Diard M."/>
            <person name="Dossat C."/>
            <person name="Karoui M.E."/>
            <person name="Frapy E."/>
            <person name="Garry L."/>
            <person name="Ghigo J.M."/>
            <person name="Gilles A.M."/>
            <person name="Johnson J."/>
            <person name="Le Bouguenec C."/>
            <person name="Lescat M."/>
            <person name="Mangenot S."/>
            <person name="Martinez-Jehanne V."/>
            <person name="Matic I."/>
            <person name="Nassif X."/>
            <person name="Oztas S."/>
            <person name="Petit M.A."/>
            <person name="Pichon C."/>
            <person name="Rouy Z."/>
            <person name="Ruf C.S."/>
            <person name="Schneider D."/>
            <person name="Tourret J."/>
            <person name="Vacherie B."/>
            <person name="Vallenet D."/>
            <person name="Medigue C."/>
            <person name="Rocha E.P.C."/>
            <person name="Denamur E."/>
        </authorList>
    </citation>
    <scope>NUCLEOTIDE SEQUENCE [LARGE SCALE GENOMIC DNA]</scope>
    <source>
        <strain>ED1a</strain>
    </source>
</reference>
<name>CITD_ECO81</name>
<gene>
    <name evidence="1" type="primary">citD</name>
    <name type="ordered locus">ECED1_0614</name>
</gene>
<feature type="chain" id="PRO_1000148562" description="Citrate lyase acyl carrier protein">
    <location>
        <begin position="1"/>
        <end position="98"/>
    </location>
</feature>
<feature type="modified residue" description="O-(phosphoribosyl dephospho-coenzyme A)serine" evidence="1">
    <location>
        <position position="14"/>
    </location>
</feature>
<dbReference type="EMBL" id="CU928162">
    <property type="protein sequence ID" value="CAR06822.1"/>
    <property type="molecule type" value="Genomic_DNA"/>
</dbReference>
<dbReference type="RefSeq" id="WP_000700706.1">
    <property type="nucleotide sequence ID" value="NC_011745.1"/>
</dbReference>
<dbReference type="SMR" id="B7MRQ5"/>
<dbReference type="KEGG" id="ecq:ECED1_0614"/>
<dbReference type="HOGENOM" id="CLU_158489_0_0_6"/>
<dbReference type="Proteomes" id="UP000000748">
    <property type="component" value="Chromosome"/>
</dbReference>
<dbReference type="GO" id="GO:0005737">
    <property type="term" value="C:cytoplasm"/>
    <property type="evidence" value="ECO:0007669"/>
    <property type="project" value="UniProtKB-SubCell"/>
</dbReference>
<dbReference type="HAMAP" id="MF_00805">
    <property type="entry name" value="CitD"/>
    <property type="match status" value="1"/>
</dbReference>
<dbReference type="InterPro" id="IPR006495">
    <property type="entry name" value="CitD"/>
</dbReference>
<dbReference type="InterPro" id="IPR023439">
    <property type="entry name" value="Mal_deCO2ase/Cit_lyase_ACP"/>
</dbReference>
<dbReference type="NCBIfam" id="TIGR01608">
    <property type="entry name" value="citD"/>
    <property type="match status" value="1"/>
</dbReference>
<dbReference type="NCBIfam" id="NF009726">
    <property type="entry name" value="PRK13253.1"/>
    <property type="match status" value="1"/>
</dbReference>
<dbReference type="Pfam" id="PF06857">
    <property type="entry name" value="ACP"/>
    <property type="match status" value="1"/>
</dbReference>
<dbReference type="PIRSF" id="PIRSF002736">
    <property type="entry name" value="Citrt_lyas_gamma"/>
    <property type="match status" value="1"/>
</dbReference>
<organism>
    <name type="scientific">Escherichia coli O81 (strain ED1a)</name>
    <dbReference type="NCBI Taxonomy" id="585397"/>
    <lineage>
        <taxon>Bacteria</taxon>
        <taxon>Pseudomonadati</taxon>
        <taxon>Pseudomonadota</taxon>
        <taxon>Gammaproteobacteria</taxon>
        <taxon>Enterobacterales</taxon>
        <taxon>Enterobacteriaceae</taxon>
        <taxon>Escherichia</taxon>
    </lineage>
</organism>
<keyword id="KW-0963">Cytoplasm</keyword>
<keyword id="KW-0597">Phosphoprotein</keyword>
<comment type="function">
    <text evidence="1">Covalent carrier of the coenzyme of citrate lyase.</text>
</comment>
<comment type="subunit">
    <text evidence="1">Oligomer with a subunit composition of (alpha,beta,gamma)6.</text>
</comment>
<comment type="subcellular location">
    <subcellularLocation>
        <location evidence="1">Cytoplasm</location>
    </subcellularLocation>
</comment>
<comment type="similarity">
    <text evidence="1">Belongs to the CitD family.</text>
</comment>
<accession>B7MRQ5</accession>
<protein>
    <recommendedName>
        <fullName evidence="1">Citrate lyase acyl carrier protein</fullName>
    </recommendedName>
    <alternativeName>
        <fullName evidence="1">Citrate lyase gamma chain</fullName>
    </alternativeName>
</protein>
<proteinExistence type="inferred from homology"/>
<sequence length="98" mass="10703">MKINQPAVAGTLESGDVMIRIAPLDTQDIDLQINSSVEKQFGDAIRTTILEVLARYNVRGVQLNVDDKGALDCILRARLEALLARASGIPALPWEDCQ</sequence>